<protein>
    <recommendedName>
        <fullName>RNA-binding protein 4F</fullName>
    </recommendedName>
</protein>
<comment type="function">
    <text evidence="5 7">May be involved in gene regulation during development. Binds RNA.</text>
</comment>
<comment type="subcellular location">
    <subcellularLocation>
        <location evidence="11">Cytoplasm</location>
    </subcellularLocation>
</comment>
<comment type="alternative products">
    <event type="alternative splicing"/>
    <isoform>
        <id>Q9W4D2-1</id>
        <name evidence="7">A</name>
        <name>H6.1</name>
        <name>E33.2</name>
        <sequence type="displayed"/>
    </isoform>
    <isoform>
        <id>Q9W4D2-2</id>
        <name evidence="7">B</name>
        <name>Pupal</name>
        <sequence type="described" ref="VSP_051659 VSP_051660"/>
    </isoform>
</comment>
<comment type="developmental stage">
    <text evidence="5">Expressed moderately during embryonic stages (0-18 hours) but then declines in late stage embryos (15-21 hours).</text>
</comment>
<comment type="RNA editing">
    <location>
        <position position="9" evidence="5 7"/>
    </location>
    <location>
        <position position="13" evidence="5 7"/>
    </location>
    <location>
        <position position="17" evidence="5 7"/>
    </location>
    <location>
        <position position="21" evidence="5 7"/>
    </location>
    <location>
        <position position="31" evidence="5 7"/>
    </location>
    <location>
        <position position="41" evidence="5 7"/>
    </location>
    <location>
        <position position="46" evidence="5 7"/>
    </location>
    <location>
        <position position="50" evidence="5 7"/>
    </location>
    <location>
        <position position="54" evidence="5 7"/>
    </location>
    <location>
        <position position="57" evidence="5 7"/>
    </location>
    <location>
        <position position="59" evidence="5 7"/>
    </location>
    <location>
        <position position="70" evidence="5 7"/>
    </location>
    <location>
        <position position="80" evidence="5 7"/>
    </location>
    <location>
        <position position="84" evidence="5 7"/>
    </location>
    <location>
        <position position="86" evidence="5 7"/>
    </location>
    <location>
        <position position="91" evidence="5 7"/>
    </location>
    <location>
        <position position="96" evidence="5 7"/>
    </location>
    <location>
        <position position="101" evidence="5 7"/>
    </location>
    <location>
        <position position="107" evidence="5 7"/>
    </location>
    <location>
        <position position="113" evidence="5 7"/>
    </location>
    <location>
        <position position="116" evidence="5 7"/>
    </location>
    <location>
        <position position="130" evidence="5 7"/>
    </location>
    <location>
        <position position="132" evidence="5 7"/>
    </location>
    <location>
        <position position="135" evidence="5 7"/>
    </location>
    <location>
        <position position="138" evidence="5 7"/>
    </location>
    <location>
        <position position="139" evidence="5 7"/>
    </location>
    <location>
        <position position="141" evidence="5 7"/>
    </location>
    <location>
        <position position="163" evidence="5 7"/>
    </location>
    <location>
        <position position="164" evidence="5 7"/>
    </location>
    <location>
        <position position="183" evidence="5 7"/>
    </location>
    <location>
        <position position="190" evidence="5 7"/>
    </location>
    <location>
        <position position="193" evidence="5 7"/>
    </location>
    <location>
        <position position="196" evidence="5 7"/>
    </location>
    <location>
        <position position="200" evidence="5 7"/>
    </location>
    <location>
        <position position="205" evidence="5 7"/>
    </location>
    <location>
        <position position="207" evidence="5 7"/>
    </location>
    <location>
        <position position="213" evidence="5 7"/>
    </location>
    <location>
        <position position="218" evidence="5 7"/>
    </location>
    <location>
        <position position="220" evidence="5 7"/>
    </location>
    <location>
        <position position="225" evidence="5 7"/>
    </location>
    <location>
        <position position="265" evidence="5 7"/>
    </location>
    <location>
        <position position="275" evidence="5 7"/>
    </location>
    <location>
        <position position="298" evidence="5 7"/>
    </location>
    <location>
        <position position="299" evidence="5 7"/>
    </location>
    <location>
        <position position="302" evidence="5 7"/>
    </location>
    <location>
        <position position="311" evidence="5 7"/>
    </location>
    <location>
        <position position="314" evidence="5 7"/>
    </location>
    <location>
        <position position="319" evidence="5 7"/>
    </location>
    <location>
        <position position="321" evidence="5 7"/>
    </location>
    <location>
        <position position="322" evidence="5 7"/>
    </location>
    <location>
        <position position="328" evidence="5 7"/>
    </location>
    <location>
        <position position="354" evidence="5 7"/>
    </location>
    <location>
        <position position="355" evidence="5 7"/>
    </location>
    <location>
        <position position="368" evidence="5 7"/>
    </location>
    <location>
        <position position="381" evidence="5 7"/>
    </location>
    <location>
        <position position="383" evidence="5 7"/>
    </location>
    <location>
        <position position="389" evidence="5 7"/>
    </location>
    <location>
        <position position="393" evidence="5 7"/>
    </location>
    <location>
        <position position="396" evidence="5 7"/>
    </location>
    <location>
        <position position="398" evidence="5 7"/>
    </location>
    <location>
        <position position="400" evidence="5 7"/>
    </location>
    <location>
        <position position="406" evidence="5 7"/>
    </location>
    <location>
        <position position="409" evidence="5 7"/>
    </location>
    <location>
        <position position="430" evidence="5 7"/>
    </location>
    <location>
        <position position="431" evidence="5 7"/>
    </location>
    <location>
        <position position="433" evidence="5 7"/>
    </location>
    <location>
        <position position="437" evidence="5 7"/>
    </location>
    <location>
        <position position="444" evidence="5 7"/>
    </location>
    <location>
        <position position="453" evidence="5 7"/>
    </location>
    <location>
        <position position="456" evidence="5 7"/>
    </location>
    <location>
        <position position="482" evidence="5 7"/>
    </location>
    <location>
        <position position="490" evidence="5 7"/>
    </location>
    <location>
        <position position="492" evidence="5 7"/>
    </location>
    <location>
        <position position="493" evidence="5 7"/>
    </location>
    <location>
        <position position="497" evidence="5 7"/>
    </location>
    <location>
        <position position="510" evidence="5 7"/>
    </location>
    <location>
        <position position="513" evidence="5 7"/>
    </location>
    <location>
        <position position="516" evidence="5 7"/>
    </location>
    <location>
        <position position="520" evidence="5 7"/>
    </location>
    <location>
        <position position="521" evidence="5 7"/>
    </location>
    <location>
        <position position="525" evidence="5 7"/>
    </location>
    <location>
        <position position="540" evidence="5 7"/>
    </location>
    <location>
        <position position="551" evidence="5 7"/>
    </location>
    <location>
        <position position="552" evidence="5 7"/>
    </location>
    <location>
        <position position="553" evidence="5 7"/>
    </location>
    <location>
        <position position="554" evidence="5 7"/>
    </location>
    <location>
        <position position="555" evidence="5 7"/>
    </location>
    <text>Partially edited. RNA editing takes place in adult and creates an intron retention event that leads to a premature stop codon. The RNA edited version is called H8.3. A discistronic transcript of Sas10 and Rnp4F becomes an RNA duplex, which is a target for RNA-editing via Adar editase.</text>
</comment>
<comment type="miscellaneous">
    <molecule>Isoform A</molecule>
    <text>Intron retention event in non-edited RNA.</text>
</comment>
<comment type="miscellaneous">
    <molecule>Isoform B</molecule>
    <text evidence="10">Intron excised in non-edited RNA.</text>
</comment>
<organism>
    <name type="scientific">Drosophila melanogaster</name>
    <name type="common">Fruit fly</name>
    <dbReference type="NCBI Taxonomy" id="7227"/>
    <lineage>
        <taxon>Eukaryota</taxon>
        <taxon>Metazoa</taxon>
        <taxon>Ecdysozoa</taxon>
        <taxon>Arthropoda</taxon>
        <taxon>Hexapoda</taxon>
        <taxon>Insecta</taxon>
        <taxon>Pterygota</taxon>
        <taxon>Neoptera</taxon>
        <taxon>Endopterygota</taxon>
        <taxon>Diptera</taxon>
        <taxon>Brachycera</taxon>
        <taxon>Muscomorpha</taxon>
        <taxon>Ephydroidea</taxon>
        <taxon>Drosophilidae</taxon>
        <taxon>Drosophila</taxon>
        <taxon>Sophophora</taxon>
    </lineage>
</organism>
<accession>Q9W4D2</accession>
<accession>A4V3Z4</accession>
<accession>O18351</accession>
<accession>O18352</accession>
<accession>Q2VC69</accession>
<accession>Q2VC70</accession>
<accession>Q2VC71</accession>
<accession>Q2VC72</accession>
<accession>Q2VC73</accession>
<accession>Q2XP46</accession>
<gene>
    <name evidence="12" type="primary">Rnp4F</name>
    <name evidence="15" type="synonym">4f-rnp</name>
    <name type="ORF">CG3312</name>
</gene>
<evidence type="ECO:0000255" key="1">
    <source>
        <dbReference type="PROSITE-ProRule" id="PRU00176"/>
    </source>
</evidence>
<evidence type="ECO:0000256" key="2">
    <source>
        <dbReference type="SAM" id="MobiDB-lite"/>
    </source>
</evidence>
<evidence type="ECO:0000269" key="3">
    <source>
    </source>
</evidence>
<evidence type="ECO:0000269" key="4">
    <source>
    </source>
</evidence>
<evidence type="ECO:0000269" key="5">
    <source>
    </source>
</evidence>
<evidence type="ECO:0000269" key="6">
    <source>
    </source>
</evidence>
<evidence type="ECO:0000269" key="7">
    <source>
    </source>
</evidence>
<evidence type="ECO:0000303" key="8">
    <source>
    </source>
</evidence>
<evidence type="ECO:0000303" key="9">
    <source>
    </source>
</evidence>
<evidence type="ECO:0000305" key="10"/>
<evidence type="ECO:0000305" key="11">
    <source>
    </source>
</evidence>
<evidence type="ECO:0000312" key="12">
    <source>
        <dbReference type="EMBL" id="AAF46022.1"/>
    </source>
</evidence>
<evidence type="ECO:0000312" key="13">
    <source>
        <dbReference type="EMBL" id="AAL28943.1"/>
    </source>
</evidence>
<evidence type="ECO:0000312" key="14">
    <source>
        <dbReference type="EMBL" id="CAA75533.1"/>
    </source>
</evidence>
<evidence type="ECO:0000312" key="15">
    <source>
        <dbReference type="EMBL" id="CAA75535.1"/>
    </source>
</evidence>
<keyword id="KW-0025">Alternative splicing</keyword>
<keyword id="KW-0963">Cytoplasm</keyword>
<keyword id="KW-0217">Developmental protein</keyword>
<keyword id="KW-0597">Phosphoprotein</keyword>
<keyword id="KW-1185">Reference proteome</keyword>
<keyword id="KW-0691">RNA editing</keyword>
<keyword id="KW-0694">RNA-binding</keyword>
<sequence length="941" mass="106740">MDADKQLERQLEKELDEMPAEDLDDDAYDEYDLIVIPDQGKGSPQQGHSESPQQEEEHKSEELRQRSRPTWPPSSAGGDMTTIELISSDDEPSVEETEGGNAAGRGRARNDSSSSSDDVGVIEGSELESNSEVSSDSDSDSDNAGGGNQLERSYQELNALPSKKFAQMVSLIGIAFKLNDLEKIESSVLELQNLATVPAHVWLKYLKARLVVTQTDEERKAFEEQCAKALGYYYSIPLSEYVVNYLVDQGNVQNHVLWAKLLADYDVERPDFGDKLRSLISTITDENEAAAFVEMLQKHCVTWTCNVEQRQMIKSVVDKFKQHLDETTRGWDWSEQHKAHVYDVETLSLDDDLKNAVIRFIFERSVAKFPIVDVLWLSYIEFIQFEGVTVPENEDENEVTAEMVAKRAKRLGKGFLRNTELDLANRGVRSHPSVQLNHRFLDLMERSDFELAEVDEEIRLILQRIVTDMDMTVELHLDYLAYRIRNTNASDEQQVASLRAAFNHAWEELTVLYGDQADTRYEVLQLWAQVEYTQLGSPDNGREIWRQIMGYPGSSIRGLLWLNFAQMESEYNGGHGTRDVLRKALSQPVLENGLMVQEFFRRYERCYGTYESIAACQALDLPVEYVKPRSRIKPNSQSAYPRQQKLKPRQQQQQTNREPLNREQRRRQAHEQQQQQQQQQKHGIKKSRTEPSGGATSPPSKVKGPANAEAKESNFKYSPNMEINKIFVRNLHPACSKEELHELFSPFGTIKDVRLVHKLNKQFKGIAYVEFEKPGEAQRAVAGRDGCLFKGMNISVAISNPPPRGTSAVKPSVAPKRRVPTSLIPTTLVRQEVAAKKLRLLLPEPGDISSTSASVDVAIKREANGEEQKGDVQERDEQKGEEQKGEEQKGEEPKGEEQKGDDQIGEEQSGVEQKGDEKKEEEMPAAVPKSNDDFRKLFLKD</sequence>
<dbReference type="EMBL" id="Y15249">
    <property type="protein sequence ID" value="CAA75533.1"/>
    <property type="molecule type" value="mRNA"/>
</dbReference>
<dbReference type="EMBL" id="Y15250">
    <property type="status" value="NOT_ANNOTATED_CDS"/>
    <property type="molecule type" value="Genomic_DNA"/>
</dbReference>
<dbReference type="EMBL" id="Y15251">
    <property type="protein sequence ID" value="CAA75535.1"/>
    <property type="molecule type" value="mRNA"/>
</dbReference>
<dbReference type="EMBL" id="AE014298">
    <property type="protein sequence ID" value="AAF46022.1"/>
    <property type="molecule type" value="Genomic_DNA"/>
</dbReference>
<dbReference type="EMBL" id="AE014298">
    <property type="protein sequence ID" value="AAS65263.1"/>
    <property type="molecule type" value="Genomic_DNA"/>
</dbReference>
<dbReference type="EMBL" id="AY061395">
    <property type="protein sequence ID" value="AAL28943.1"/>
    <property type="molecule type" value="mRNA"/>
</dbReference>
<dbReference type="EMBL" id="DQ269487">
    <property type="protein sequence ID" value="ABB89902.1"/>
    <property type="molecule type" value="mRNA"/>
</dbReference>
<dbReference type="EMBL" id="DQ269488">
    <property type="protein sequence ID" value="ABB89903.1"/>
    <property type="molecule type" value="mRNA"/>
</dbReference>
<dbReference type="EMBL" id="DQ269489">
    <property type="protein sequence ID" value="ABB89904.1"/>
    <property type="molecule type" value="mRNA"/>
</dbReference>
<dbReference type="EMBL" id="DQ269490">
    <property type="protein sequence ID" value="ABB89905.1"/>
    <property type="molecule type" value="mRNA"/>
</dbReference>
<dbReference type="EMBL" id="DQ269491">
    <property type="protein sequence ID" value="ABB89906.1"/>
    <property type="molecule type" value="mRNA"/>
</dbReference>
<dbReference type="EMBL" id="DQ272384">
    <property type="protein sequence ID" value="ABB82038.1"/>
    <property type="molecule type" value="mRNA"/>
</dbReference>
<dbReference type="RefSeq" id="NP_001096883.3">
    <molecule id="Q9W4D2-1"/>
    <property type="nucleotide sequence ID" value="NM_001103413.3"/>
</dbReference>
<dbReference type="RefSeq" id="NP_001096884.1">
    <molecule id="Q9W4D2-1"/>
    <property type="nucleotide sequence ID" value="NM_001103414.3"/>
</dbReference>
<dbReference type="RefSeq" id="NP_511047.2">
    <molecule id="Q9W4D2-1"/>
    <property type="nucleotide sequence ID" value="NM_078492.4"/>
</dbReference>
<dbReference type="RefSeq" id="NP_996353.1">
    <molecule id="Q9W4D2-1"/>
    <property type="nucleotide sequence ID" value="NM_206630.3"/>
</dbReference>
<dbReference type="SMR" id="Q9W4D2"/>
<dbReference type="BioGRID" id="57958">
    <property type="interactions" value="4"/>
</dbReference>
<dbReference type="FunCoup" id="Q9W4D2">
    <property type="interactions" value="1418"/>
</dbReference>
<dbReference type="IntAct" id="Q9W4D2">
    <property type="interactions" value="6"/>
</dbReference>
<dbReference type="STRING" id="7227.FBpp0070720"/>
<dbReference type="iPTMnet" id="Q9W4D2"/>
<dbReference type="PaxDb" id="7227-FBpp0089396"/>
<dbReference type="PeptideAtlas" id="Q9W4D2"/>
<dbReference type="DNASU" id="31448"/>
<dbReference type="EnsemblMetazoa" id="FBtr0070752">
    <molecule id="Q9W4D2-1"/>
    <property type="protein sequence ID" value="FBpp0070720"/>
    <property type="gene ID" value="FBgn0014024"/>
</dbReference>
<dbReference type="EnsemblMetazoa" id="FBtr0070753">
    <molecule id="Q9W4D2-1"/>
    <property type="protein sequence ID" value="FBpp0089396"/>
    <property type="gene ID" value="FBgn0014024"/>
</dbReference>
<dbReference type="EnsemblMetazoa" id="FBtr0112876">
    <molecule id="Q9W4D2-1"/>
    <property type="protein sequence ID" value="FBpp0111789"/>
    <property type="gene ID" value="FBgn0014024"/>
</dbReference>
<dbReference type="EnsemblMetazoa" id="FBtr0340477">
    <molecule id="Q9W4D2-1"/>
    <property type="protein sequence ID" value="FBpp0309418"/>
    <property type="gene ID" value="FBgn0014024"/>
</dbReference>
<dbReference type="GeneID" id="31448"/>
<dbReference type="KEGG" id="dme:Dmel_CG3312"/>
<dbReference type="AGR" id="FB:FBgn0014024"/>
<dbReference type="CTD" id="31448"/>
<dbReference type="FlyBase" id="FBgn0014024">
    <property type="gene designation" value="Rnp4F"/>
</dbReference>
<dbReference type="VEuPathDB" id="VectorBase:FBgn0014024"/>
<dbReference type="eggNOG" id="KOG0128">
    <property type="taxonomic scope" value="Eukaryota"/>
</dbReference>
<dbReference type="GeneTree" id="ENSGT00900000141107"/>
<dbReference type="HOGENOM" id="CLU_361804_0_0_1"/>
<dbReference type="InParanoid" id="Q9W4D2"/>
<dbReference type="OMA" id="PAHIWLK"/>
<dbReference type="OrthoDB" id="360390at2759"/>
<dbReference type="PhylomeDB" id="Q9W4D2"/>
<dbReference type="BioGRID-ORCS" id="31448">
    <property type="hits" value="1 hit in 1 CRISPR screen"/>
</dbReference>
<dbReference type="GenomeRNAi" id="31448"/>
<dbReference type="PRO" id="PR:Q9W4D2"/>
<dbReference type="Proteomes" id="UP000000803">
    <property type="component" value="Chromosome X"/>
</dbReference>
<dbReference type="Bgee" id="FBgn0014024">
    <property type="expression patterns" value="Expressed in intestinal stem cell (Drosophila) in digestive tract and 148 other cell types or tissues"/>
</dbReference>
<dbReference type="ExpressionAtlas" id="Q9W4D2">
    <property type="expression patterns" value="baseline and differential"/>
</dbReference>
<dbReference type="GO" id="GO:0061574">
    <property type="term" value="C:ASAP complex"/>
    <property type="evidence" value="ECO:0000318"/>
    <property type="project" value="GO_Central"/>
</dbReference>
<dbReference type="GO" id="GO:0005737">
    <property type="term" value="C:cytoplasm"/>
    <property type="evidence" value="ECO:0000318"/>
    <property type="project" value="GO_Central"/>
</dbReference>
<dbReference type="GO" id="GO:0005654">
    <property type="term" value="C:nucleoplasm"/>
    <property type="evidence" value="ECO:0000318"/>
    <property type="project" value="GO_Central"/>
</dbReference>
<dbReference type="GO" id="GO:0003729">
    <property type="term" value="F:mRNA binding"/>
    <property type="evidence" value="ECO:0000250"/>
    <property type="project" value="FlyBase"/>
</dbReference>
<dbReference type="GO" id="GO:0007417">
    <property type="term" value="P:central nervous system development"/>
    <property type="evidence" value="ECO:0000315"/>
    <property type="project" value="FlyBase"/>
</dbReference>
<dbReference type="GO" id="GO:0000398">
    <property type="term" value="P:mRNA splicing, via spliceosome"/>
    <property type="evidence" value="ECO:0000318"/>
    <property type="project" value="GO_Central"/>
</dbReference>
<dbReference type="Gene3D" id="3.30.70.330">
    <property type="match status" value="1"/>
</dbReference>
<dbReference type="Gene3D" id="1.25.40.10">
    <property type="entry name" value="Tetratricopeptide repeat domain"/>
    <property type="match status" value="1"/>
</dbReference>
<dbReference type="InterPro" id="IPR003107">
    <property type="entry name" value="HAT"/>
</dbReference>
<dbReference type="InterPro" id="IPR008669">
    <property type="entry name" value="LSM_interact"/>
</dbReference>
<dbReference type="InterPro" id="IPR012677">
    <property type="entry name" value="Nucleotide-bd_a/b_plait_sf"/>
</dbReference>
<dbReference type="InterPro" id="IPR035979">
    <property type="entry name" value="RBD_domain_sf"/>
</dbReference>
<dbReference type="InterPro" id="IPR000504">
    <property type="entry name" value="RRM_dom"/>
</dbReference>
<dbReference type="InterPro" id="IPR011990">
    <property type="entry name" value="TPR-like_helical_dom_sf"/>
</dbReference>
<dbReference type="PANTHER" id="PTHR15481:SF0">
    <property type="entry name" value="LD23870P-RELATED"/>
    <property type="match status" value="1"/>
</dbReference>
<dbReference type="PANTHER" id="PTHR15481">
    <property type="entry name" value="RIBONUCLEIC ACID BINDING PROTEIN S1"/>
    <property type="match status" value="1"/>
</dbReference>
<dbReference type="Pfam" id="PF05391">
    <property type="entry name" value="Lsm_interact"/>
    <property type="match status" value="1"/>
</dbReference>
<dbReference type="Pfam" id="PF00076">
    <property type="entry name" value="RRM_1"/>
    <property type="match status" value="1"/>
</dbReference>
<dbReference type="SMART" id="SM00386">
    <property type="entry name" value="HAT"/>
    <property type="match status" value="3"/>
</dbReference>
<dbReference type="SMART" id="SM00360">
    <property type="entry name" value="RRM"/>
    <property type="match status" value="1"/>
</dbReference>
<dbReference type="SUPFAM" id="SSF54928">
    <property type="entry name" value="RNA-binding domain, RBD"/>
    <property type="match status" value="1"/>
</dbReference>
<dbReference type="SUPFAM" id="SSF48452">
    <property type="entry name" value="TPR-like"/>
    <property type="match status" value="1"/>
</dbReference>
<dbReference type="PROSITE" id="PS50102">
    <property type="entry name" value="RRM"/>
    <property type="match status" value="1"/>
</dbReference>
<name>RNP4F_DROME</name>
<reference evidence="10 14" key="1">
    <citation type="journal article" date="1997" name="Gene">
        <title>RNA hyperediting and alternative splicing generate mRNA transcript diversity from the Drosophila 4f-rnp locus.</title>
        <authorList>
            <person name="Petschek J.P."/>
            <person name="Scheckelhoff M.R."/>
            <person name="Mermer M.J."/>
            <person name="Vaughn J.C."/>
        </authorList>
    </citation>
    <scope>NUCLEOTIDE SEQUENCE [GENOMIC DNA / MRNA] (ISOFORMS A AND B)</scope>
    <scope>FUNCTION</scope>
    <scope>SUBCELLULAR LOCATION</scope>
    <scope>RNA EDITING</scope>
    <source>
        <strain evidence="7">Oregon-R</strain>
        <tissue evidence="7">Embryo</tissue>
        <tissue evidence="14">Head</tissue>
        <tissue evidence="7">Pupae</tissue>
    </source>
</reference>
<reference evidence="10 12" key="2">
    <citation type="journal article" date="2000" name="Science">
        <title>The genome sequence of Drosophila melanogaster.</title>
        <authorList>
            <person name="Adams M.D."/>
            <person name="Celniker S.E."/>
            <person name="Holt R.A."/>
            <person name="Evans C.A."/>
            <person name="Gocayne J.D."/>
            <person name="Amanatides P.G."/>
            <person name="Scherer S.E."/>
            <person name="Li P.W."/>
            <person name="Hoskins R.A."/>
            <person name="Galle R.F."/>
            <person name="George R.A."/>
            <person name="Lewis S.E."/>
            <person name="Richards S."/>
            <person name="Ashburner M."/>
            <person name="Henderson S.N."/>
            <person name="Sutton G.G."/>
            <person name="Wortman J.R."/>
            <person name="Yandell M.D."/>
            <person name="Zhang Q."/>
            <person name="Chen L.X."/>
            <person name="Brandon R.C."/>
            <person name="Rogers Y.-H.C."/>
            <person name="Blazej R.G."/>
            <person name="Champe M."/>
            <person name="Pfeiffer B.D."/>
            <person name="Wan K.H."/>
            <person name="Doyle C."/>
            <person name="Baxter E.G."/>
            <person name="Helt G."/>
            <person name="Nelson C.R."/>
            <person name="Miklos G.L.G."/>
            <person name="Abril J.F."/>
            <person name="Agbayani A."/>
            <person name="An H.-J."/>
            <person name="Andrews-Pfannkoch C."/>
            <person name="Baldwin D."/>
            <person name="Ballew R.M."/>
            <person name="Basu A."/>
            <person name="Baxendale J."/>
            <person name="Bayraktaroglu L."/>
            <person name="Beasley E.M."/>
            <person name="Beeson K.Y."/>
            <person name="Benos P.V."/>
            <person name="Berman B.P."/>
            <person name="Bhandari D."/>
            <person name="Bolshakov S."/>
            <person name="Borkova D."/>
            <person name="Botchan M.R."/>
            <person name="Bouck J."/>
            <person name="Brokstein P."/>
            <person name="Brottier P."/>
            <person name="Burtis K.C."/>
            <person name="Busam D.A."/>
            <person name="Butler H."/>
            <person name="Cadieu E."/>
            <person name="Center A."/>
            <person name="Chandra I."/>
            <person name="Cherry J.M."/>
            <person name="Cawley S."/>
            <person name="Dahlke C."/>
            <person name="Davenport L.B."/>
            <person name="Davies P."/>
            <person name="de Pablos B."/>
            <person name="Delcher A."/>
            <person name="Deng Z."/>
            <person name="Mays A.D."/>
            <person name="Dew I."/>
            <person name="Dietz S.M."/>
            <person name="Dodson K."/>
            <person name="Doup L.E."/>
            <person name="Downes M."/>
            <person name="Dugan-Rocha S."/>
            <person name="Dunkov B.C."/>
            <person name="Dunn P."/>
            <person name="Durbin K.J."/>
            <person name="Evangelista C.C."/>
            <person name="Ferraz C."/>
            <person name="Ferriera S."/>
            <person name="Fleischmann W."/>
            <person name="Fosler C."/>
            <person name="Gabrielian A.E."/>
            <person name="Garg N.S."/>
            <person name="Gelbart W.M."/>
            <person name="Glasser K."/>
            <person name="Glodek A."/>
            <person name="Gong F."/>
            <person name="Gorrell J.H."/>
            <person name="Gu Z."/>
            <person name="Guan P."/>
            <person name="Harris M."/>
            <person name="Harris N.L."/>
            <person name="Harvey D.A."/>
            <person name="Heiman T.J."/>
            <person name="Hernandez J.R."/>
            <person name="Houck J."/>
            <person name="Hostin D."/>
            <person name="Houston K.A."/>
            <person name="Howland T.J."/>
            <person name="Wei M.-H."/>
            <person name="Ibegwam C."/>
            <person name="Jalali M."/>
            <person name="Kalush F."/>
            <person name="Karpen G.H."/>
            <person name="Ke Z."/>
            <person name="Kennison J.A."/>
            <person name="Ketchum K.A."/>
            <person name="Kimmel B.E."/>
            <person name="Kodira C.D."/>
            <person name="Kraft C.L."/>
            <person name="Kravitz S."/>
            <person name="Kulp D."/>
            <person name="Lai Z."/>
            <person name="Lasko P."/>
            <person name="Lei Y."/>
            <person name="Levitsky A.A."/>
            <person name="Li J.H."/>
            <person name="Li Z."/>
            <person name="Liang Y."/>
            <person name="Lin X."/>
            <person name="Liu X."/>
            <person name="Mattei B."/>
            <person name="McIntosh T.C."/>
            <person name="McLeod M.P."/>
            <person name="McPherson D."/>
            <person name="Merkulov G."/>
            <person name="Milshina N.V."/>
            <person name="Mobarry C."/>
            <person name="Morris J."/>
            <person name="Moshrefi A."/>
            <person name="Mount S.M."/>
            <person name="Moy M."/>
            <person name="Murphy B."/>
            <person name="Murphy L."/>
            <person name="Muzny D.M."/>
            <person name="Nelson D.L."/>
            <person name="Nelson D.R."/>
            <person name="Nelson K.A."/>
            <person name="Nixon K."/>
            <person name="Nusskern D.R."/>
            <person name="Pacleb J.M."/>
            <person name="Palazzolo M."/>
            <person name="Pittman G.S."/>
            <person name="Pan S."/>
            <person name="Pollard J."/>
            <person name="Puri V."/>
            <person name="Reese M.G."/>
            <person name="Reinert K."/>
            <person name="Remington K."/>
            <person name="Saunders R.D.C."/>
            <person name="Scheeler F."/>
            <person name="Shen H."/>
            <person name="Shue B.C."/>
            <person name="Siden-Kiamos I."/>
            <person name="Simpson M."/>
            <person name="Skupski M.P."/>
            <person name="Smith T.J."/>
            <person name="Spier E."/>
            <person name="Spradling A.C."/>
            <person name="Stapleton M."/>
            <person name="Strong R."/>
            <person name="Sun E."/>
            <person name="Svirskas R."/>
            <person name="Tector C."/>
            <person name="Turner R."/>
            <person name="Venter E."/>
            <person name="Wang A.H."/>
            <person name="Wang X."/>
            <person name="Wang Z.-Y."/>
            <person name="Wassarman D.A."/>
            <person name="Weinstock G.M."/>
            <person name="Weissenbach J."/>
            <person name="Williams S.M."/>
            <person name="Woodage T."/>
            <person name="Worley K.C."/>
            <person name="Wu D."/>
            <person name="Yang S."/>
            <person name="Yao Q.A."/>
            <person name="Ye J."/>
            <person name="Yeh R.-F."/>
            <person name="Zaveri J.S."/>
            <person name="Zhan M."/>
            <person name="Zhang G."/>
            <person name="Zhao Q."/>
            <person name="Zheng L."/>
            <person name="Zheng X.H."/>
            <person name="Zhong F.N."/>
            <person name="Zhong W."/>
            <person name="Zhou X."/>
            <person name="Zhu S.C."/>
            <person name="Zhu X."/>
            <person name="Smith H.O."/>
            <person name="Gibbs R.A."/>
            <person name="Myers E.W."/>
            <person name="Rubin G.M."/>
            <person name="Venter J.C."/>
        </authorList>
    </citation>
    <scope>NUCLEOTIDE SEQUENCE [LARGE SCALE GENOMIC DNA]</scope>
    <source>
        <strain evidence="3">Berkeley</strain>
    </source>
</reference>
<reference evidence="10 12" key="3">
    <citation type="journal article" date="2002" name="Genome Biol.">
        <title>Annotation of the Drosophila melanogaster euchromatic genome: a systematic review.</title>
        <authorList>
            <person name="Misra S."/>
            <person name="Crosby M.A."/>
            <person name="Mungall C.J."/>
            <person name="Matthews B.B."/>
            <person name="Campbell K.S."/>
            <person name="Hradecky P."/>
            <person name="Huang Y."/>
            <person name="Kaminker J.S."/>
            <person name="Millburn G.H."/>
            <person name="Prochnik S.E."/>
            <person name="Smith C.D."/>
            <person name="Tupy J.L."/>
            <person name="Whitfield E.J."/>
            <person name="Bayraktaroglu L."/>
            <person name="Berman B.P."/>
            <person name="Bettencourt B.R."/>
            <person name="Celniker S.E."/>
            <person name="de Grey A.D.N.J."/>
            <person name="Drysdale R.A."/>
            <person name="Harris N.L."/>
            <person name="Richter J."/>
            <person name="Russo S."/>
            <person name="Schroeder A.J."/>
            <person name="Shu S.Q."/>
            <person name="Stapleton M."/>
            <person name="Yamada C."/>
            <person name="Ashburner M."/>
            <person name="Gelbart W.M."/>
            <person name="Rubin G.M."/>
            <person name="Lewis S.E."/>
        </authorList>
    </citation>
    <scope>GENOME REANNOTATION</scope>
    <source>
        <strain>Berkeley</strain>
    </source>
</reference>
<reference evidence="10 13" key="4">
    <citation type="journal article" date="2002" name="Genome Biol.">
        <title>A Drosophila full-length cDNA resource.</title>
        <authorList>
            <person name="Stapleton M."/>
            <person name="Carlson J.W."/>
            <person name="Brokstein P."/>
            <person name="Yu C."/>
            <person name="Champe M."/>
            <person name="George R.A."/>
            <person name="Guarin H."/>
            <person name="Kronmiller B."/>
            <person name="Pacleb J.M."/>
            <person name="Park S."/>
            <person name="Wan K.H."/>
            <person name="Rubin G.M."/>
            <person name="Celniker S.E."/>
        </authorList>
    </citation>
    <scope>NUCLEOTIDE SEQUENCE [LARGE SCALE MRNA]</scope>
    <source>
        <strain evidence="4">Berkeley</strain>
        <tissue evidence="4">Embryo</tissue>
    </source>
</reference>
<reference key="5">
    <citation type="journal article" date="2006" name="Gene">
        <title>Alternative pre-mRNA splicing in Drosophila spliceosomal assembly factor RNP-4F during development.</title>
        <authorList>
            <person name="Fetherson R.A."/>
            <person name="Strock S.B."/>
            <person name="White K.N."/>
            <person name="Vaughn J.C."/>
        </authorList>
    </citation>
    <scope>NUCLEOTIDE SEQUENCE [MRNA] OF 1-243 AND 542-801 (ISOFORMS A AND B)</scope>
    <scope>ALTERNATIVE SPLICING</scope>
</reference>
<reference evidence="10" key="6">
    <citation type="journal article" date="2003" name="RNA">
        <title>RNA editing and regulation of Drosophila 4f-rnp expression by sas-10 antisense readthrough mRNA transcripts.</title>
        <authorList>
            <person name="Peters N.T."/>
            <person name="Rohrbach J.A."/>
            <person name="Zalewski B.A."/>
            <person name="Byrkett C.M."/>
            <person name="Vaughn J.C."/>
        </authorList>
    </citation>
    <scope>FUNCTION</scope>
    <scope>RNA EDITING</scope>
    <scope>DEVELOPMENTAL STAGE</scope>
    <scope>INTERACTION WITH SAS10</scope>
    <source>
        <strain evidence="5">Oregon-R</strain>
    </source>
</reference>
<reference key="7">
    <citation type="journal article" date="2008" name="J. Proteome Res.">
        <title>Phosphoproteome analysis of Drosophila melanogaster embryos.</title>
        <authorList>
            <person name="Zhai B."/>
            <person name="Villen J."/>
            <person name="Beausoleil S.A."/>
            <person name="Mintseris J."/>
            <person name="Gygi S.P."/>
        </authorList>
    </citation>
    <scope>PHOSPHORYLATION [LARGE SCALE ANALYSIS] AT SER-43; SER-153; SER-713; TYR-717 AND SER-718</scope>
    <scope>IDENTIFICATION BY MASS SPECTROMETRY</scope>
    <source>
        <tissue>Embryo</tissue>
    </source>
</reference>
<proteinExistence type="evidence at protein level"/>
<feature type="chain" id="PRO_0000081811" description="RNA-binding protein 4F">
    <location>
        <begin position="1"/>
        <end position="941"/>
    </location>
</feature>
<feature type="domain" description="RRM" evidence="1">
    <location>
        <begin position="724"/>
        <end position="801"/>
    </location>
</feature>
<feature type="region of interest" description="Disordered" evidence="2">
    <location>
        <begin position="1"/>
        <end position="149"/>
    </location>
</feature>
<feature type="region of interest" description="Disordered" evidence="2">
    <location>
        <begin position="629"/>
        <end position="713"/>
    </location>
</feature>
<feature type="region of interest" description="Disordered" evidence="2">
    <location>
        <begin position="862"/>
        <end position="941"/>
    </location>
</feature>
<feature type="compositionally biased region" description="Basic and acidic residues" evidence="2">
    <location>
        <begin position="1"/>
        <end position="13"/>
    </location>
</feature>
<feature type="compositionally biased region" description="Acidic residues" evidence="2">
    <location>
        <begin position="14"/>
        <end position="32"/>
    </location>
</feature>
<feature type="compositionally biased region" description="Polar residues" evidence="2">
    <location>
        <begin position="42"/>
        <end position="52"/>
    </location>
</feature>
<feature type="compositionally biased region" description="Basic and acidic residues" evidence="2">
    <location>
        <begin position="55"/>
        <end position="65"/>
    </location>
</feature>
<feature type="compositionally biased region" description="Acidic residues" evidence="2">
    <location>
        <begin position="87"/>
        <end position="98"/>
    </location>
</feature>
<feature type="compositionally biased region" description="Low complexity" evidence="2">
    <location>
        <begin position="111"/>
        <end position="134"/>
    </location>
</feature>
<feature type="compositionally biased region" description="Low complexity" evidence="2">
    <location>
        <begin position="671"/>
        <end position="680"/>
    </location>
</feature>
<feature type="compositionally biased region" description="Basic and acidic residues" evidence="2">
    <location>
        <begin position="862"/>
        <end position="902"/>
    </location>
</feature>
<feature type="compositionally biased region" description="Basic and acidic residues" evidence="2">
    <location>
        <begin position="913"/>
        <end position="922"/>
    </location>
</feature>
<feature type="compositionally biased region" description="Basic and acidic residues" evidence="2">
    <location>
        <begin position="930"/>
        <end position="941"/>
    </location>
</feature>
<feature type="modified residue" description="Phosphoserine" evidence="6">
    <location>
        <position position="43"/>
    </location>
</feature>
<feature type="modified residue" description="Phosphoserine" evidence="6">
    <location>
        <position position="153"/>
    </location>
</feature>
<feature type="modified residue" description="Phosphoserine" evidence="6">
    <location>
        <position position="713"/>
    </location>
</feature>
<feature type="modified residue" description="Phosphotyrosine" evidence="6">
    <location>
        <position position="717"/>
    </location>
</feature>
<feature type="modified residue" description="Phosphoserine" evidence="6">
    <location>
        <position position="718"/>
    </location>
</feature>
<feature type="splice variant" id="VSP_051659" description="In isoform B." evidence="8 9">
    <original>YVKPRSRIKPNSQSA</original>
    <variation>SLSRASSSNKRIVSH</variation>
    <location>
        <begin position="625"/>
        <end position="639"/>
    </location>
</feature>
<feature type="splice variant" id="VSP_051660" description="In isoform B." evidence="8 9">
    <location>
        <begin position="640"/>
        <end position="941"/>
    </location>
</feature>
<feature type="sequence variant" description="In RNA edited version.">
    <original>R</original>
    <variation>G</variation>
    <location>
        <position position="9"/>
    </location>
</feature>
<feature type="sequence variant" description="In RNA edited version.">
    <original>K</original>
    <variation>R</variation>
    <location>
        <position position="13"/>
    </location>
</feature>
<feature type="sequence variant" description="In RNA edited version.">
    <original>E</original>
    <variation>G</variation>
    <location>
        <position position="17"/>
    </location>
</feature>
<feature type="sequence variant" description="In RNA edited version.">
    <original>E</original>
    <variation>G</variation>
    <location>
        <position position="21"/>
    </location>
</feature>
<feature type="sequence variant" description="In RNA edited version.">
    <original>Y</original>
    <variation>C</variation>
    <location>
        <position position="31"/>
    </location>
</feature>
<feature type="sequence variant" description="In RNA edited version.">
    <original>K</original>
    <variation>G</variation>
    <location>
        <position position="41"/>
    </location>
</feature>
<feature type="sequence variant" description="In RNA edited version.">
    <original>Q</original>
    <variation>R</variation>
    <location>
        <position position="46"/>
    </location>
</feature>
<feature type="sequence variant" description="In RNA edited version.">
    <original>E</original>
    <variation>G</variation>
    <location>
        <position position="50"/>
    </location>
</feature>
<feature type="sequence variant" description="In RNA edited version.">
    <original>Q</original>
    <variation>R</variation>
    <location>
        <position position="54"/>
    </location>
</feature>
<feature type="sequence variant" description="In RNA edited version.">
    <original>E</original>
    <variation>G</variation>
    <location>
        <position position="57"/>
    </location>
</feature>
<feature type="sequence variant" description="In RNA edited version.">
    <original>K</original>
    <variation>R</variation>
    <location>
        <position position="59"/>
    </location>
</feature>
<feature type="sequence variant" description="In RNA edited version.">
    <original>T</original>
    <variation>A</variation>
    <location>
        <position position="70"/>
    </location>
</feature>
<feature type="sequence variant" description="In RNA edited version.">
    <original>M</original>
    <variation>V</variation>
    <location>
        <position position="80"/>
    </location>
</feature>
<feature type="sequence variant" description="In RNA edited version.">
    <original>E</original>
    <variation>G</variation>
    <location>
        <position position="84"/>
    </location>
</feature>
<feature type="sequence variant" description="In RNA edited version.">
    <original>I</original>
    <variation>V</variation>
    <location>
        <position position="86"/>
    </location>
</feature>
<feature type="sequence variant" description="In RNA edited version.">
    <original>E</original>
    <variation>G</variation>
    <location>
        <position position="91"/>
    </location>
</feature>
<feature type="sequence variant" description="In RNA edited version.">
    <original>E</original>
    <variation>G</variation>
    <location>
        <position position="96"/>
    </location>
</feature>
<feature type="sequence variant" description="In RNA edited version.">
    <original>N</original>
    <variation>G</variation>
    <location>
        <position position="101"/>
    </location>
</feature>
<feature type="sequence variant" description="In RNA edited version.">
    <original>R</original>
    <variation>G</variation>
    <location>
        <position position="107"/>
    </location>
</feature>
<feature type="sequence variant" description="In RNA edited version.">
    <original>S</original>
    <variation>G</variation>
    <location>
        <position position="113"/>
    </location>
</feature>
<feature type="sequence variant" description="In RNA edited version.">
    <original>S</original>
    <variation>G</variation>
    <location>
        <position position="116"/>
    </location>
</feature>
<feature type="sequence variant" description="In RNA edited version.">
    <original>N</original>
    <variation>S</variation>
    <location>
        <position position="130"/>
    </location>
</feature>
<feature type="sequence variant" description="In RNA edited version.">
    <original>E</original>
    <variation>G</variation>
    <location>
        <position position="132"/>
    </location>
</feature>
<feature type="sequence variant" description="In RNA edited version.">
    <original>S</original>
    <variation>G</variation>
    <location>
        <position position="135"/>
    </location>
</feature>
<feature type="sequence variant" description="In RNA edited version.">
    <original>D</original>
    <variation>G</variation>
    <location>
        <position position="138"/>
    </location>
</feature>
<feature type="sequence variant" description="In RNA edited version.">
    <original>S</original>
    <variation>G</variation>
    <location>
        <position position="139"/>
    </location>
</feature>
<feature type="sequence variant" description="In RNA edited version.">
    <original>S</original>
    <variation>G</variation>
    <location>
        <position position="141"/>
    </location>
</feature>
<feature type="sequence variant" description="In RNA edited version.">
    <original>K</original>
    <variation>R</variation>
    <location>
        <position position="163"/>
    </location>
</feature>
<feature type="sequence variant" description="In RNA edited version.">
    <original>K</original>
    <variation>G</variation>
    <location>
        <position position="164"/>
    </location>
</feature>
<feature type="sequence variant" description="In RNA edited version.">
    <original>K</original>
    <variation>G</variation>
    <location>
        <position position="183"/>
    </location>
</feature>
<feature type="sequence variant" description="In RNA edited version.">
    <original>E</original>
    <variation>G</variation>
    <location>
        <position position="190"/>
    </location>
</feature>
<feature type="sequence variant" description="In RNA edited version.">
    <original>N</original>
    <variation>G</variation>
    <location>
        <position position="193"/>
    </location>
</feature>
<feature type="sequence variant" description="In RNA edited version.">
    <original>T</original>
    <variation>A</variation>
    <location>
        <position position="196"/>
    </location>
</feature>
<feature type="sequence variant" description="In RNA edited version.">
    <original>H</original>
    <variation>R</variation>
    <location>
        <position position="200"/>
    </location>
</feature>
<feature type="sequence variant" description="In RNA edited version.">
    <original>Y</original>
    <variation>C</variation>
    <location>
        <position position="205"/>
    </location>
</feature>
<feature type="sequence variant" description="In RNA edited version.">
    <original>K</original>
    <variation>G</variation>
    <location>
        <position position="207"/>
    </location>
</feature>
<feature type="sequence variant" description="In RNA edited version.">
    <original>T</original>
    <variation>A</variation>
    <location>
        <position position="213"/>
    </location>
</feature>
<feature type="sequence variant" description="In RNA edited version.">
    <original>E</original>
    <variation>G</variation>
    <location>
        <position position="218"/>
    </location>
</feature>
<feature type="sequence variant" description="In RNA edited version.">
    <original>K</original>
    <variation>G</variation>
    <location>
        <position position="220"/>
    </location>
</feature>
<feature type="sequence variant" description="In RNA edited version.">
    <original>Q</original>
    <variation>R</variation>
    <location>
        <position position="225"/>
    </location>
</feature>
<feature type="sequence variant" description="In RNA edited version.">
    <original>Y</original>
    <variation>C</variation>
    <location>
        <position position="265"/>
    </location>
</feature>
<feature type="sequence variant" description="In RNA edited version.">
    <original>K</original>
    <variation>R</variation>
    <location>
        <position position="275"/>
    </location>
</feature>
<feature type="sequence variant" description="In RNA edited version.">
    <original>K</original>
    <variation>G</variation>
    <location>
        <position position="298"/>
    </location>
</feature>
<feature type="sequence variant" description="In RNA edited version.">
    <original>H</original>
    <variation>R</variation>
    <location>
        <position position="299"/>
    </location>
</feature>
<feature type="sequence variant" description="In RNA edited version.">
    <original>T</original>
    <variation>A</variation>
    <location>
        <position position="302"/>
    </location>
</feature>
<feature type="sequence variant" description="In RNA edited version.">
    <original>Q</original>
    <variation>R</variation>
    <location>
        <position position="311"/>
    </location>
</feature>
<feature type="sequence variant" description="In RNA edited version.">
    <original>K</original>
    <variation>G</variation>
    <location>
        <position position="314"/>
    </location>
</feature>
<feature type="sequence variant" description="In RNA edited version.">
    <original>K</original>
    <variation>R</variation>
    <location>
        <position position="319"/>
    </location>
</feature>
<feature type="sequence variant" description="In RNA edited version.">
    <original>K</original>
    <variation>E</variation>
    <location>
        <position position="321"/>
    </location>
</feature>
<feature type="sequence variant" description="In RNA edited version.">
    <original>Q</original>
    <variation>R</variation>
    <location>
        <position position="322"/>
    </location>
</feature>
<feature type="sequence variant" description="In RNA edited version.">
    <original>T</original>
    <variation>A</variation>
    <location>
        <position position="328"/>
    </location>
</feature>
<feature type="sequence variant" description="In RNA edited version.">
    <original>K</original>
    <variation>R</variation>
    <location>
        <position position="354"/>
    </location>
</feature>
<feature type="sequence variant" description="In RNA edited version.">
    <original>N</original>
    <variation>S</variation>
    <location>
        <position position="355"/>
    </location>
</feature>
<feature type="sequence variant" description="In RNA edited version.">
    <original>K</original>
    <variation>G</variation>
    <location>
        <position position="368"/>
    </location>
</feature>
<feature type="sequence variant" description="In RNA edited version.">
    <original>E</original>
    <variation>G</variation>
    <location>
        <position position="381"/>
    </location>
</feature>
<feature type="sequence variant" description="In RNA edited version.">
    <original>I</original>
    <variation>V</variation>
    <location>
        <position position="383"/>
    </location>
</feature>
<feature type="sequence variant" description="In RNA edited version.">
    <original>T</original>
    <variation>A</variation>
    <location>
        <position position="389"/>
    </location>
</feature>
<feature type="sequence variant" description="In RNA edited version.">
    <original>N</original>
    <variation>S</variation>
    <location>
        <position position="393"/>
    </location>
</feature>
<feature type="sequence variant" description="In RNA edited version.">
    <original>E</original>
    <variation>G</variation>
    <location>
        <position position="396"/>
    </location>
</feature>
<feature type="sequence variant" description="In RNA edited version.">
    <original>E</original>
    <variation>G</variation>
    <location>
        <position position="398"/>
    </location>
</feature>
<feature type="sequence variant" description="In RNA edited version.">
    <original>T</original>
    <variation>A</variation>
    <location>
        <position position="400"/>
    </location>
</feature>
<feature type="sequence variant" description="In RNA edited version.">
    <original>K</original>
    <variation>R</variation>
    <location>
        <position position="406"/>
    </location>
</feature>
<feature type="sequence variant" description="In RNA edited version.">
    <original>K</original>
    <variation>E</variation>
    <location>
        <position position="409"/>
    </location>
</feature>
<feature type="sequence variant" description="In RNA edited version.">
    <original>S</original>
    <variation>G</variation>
    <location>
        <position position="430"/>
    </location>
</feature>
<feature type="sequence variant" description="In RNA edited version.">
    <original>H</original>
    <variation>R</variation>
    <location>
        <position position="431"/>
    </location>
</feature>
<feature type="sequence variant" description="In RNA edited version.">
    <original>S</original>
    <variation>G</variation>
    <location>
        <position position="433"/>
    </location>
</feature>
<feature type="sequence variant" description="In RNA edited version.">
    <original>N</original>
    <variation>S</variation>
    <location>
        <position position="437"/>
    </location>
</feature>
<feature type="sequence variant" description="In RNA edited version.">
    <original>M</original>
    <variation>V</variation>
    <location>
        <position position="444"/>
    </location>
</feature>
<feature type="sequence variant" description="In RNA edited version.">
    <original>E</original>
    <variation>G</variation>
    <location>
        <position position="453"/>
    </location>
</feature>
<feature type="sequence variant" description="In RNA edited version.">
    <original>E</original>
    <variation>G</variation>
    <location>
        <position position="456"/>
    </location>
</feature>
<feature type="sequence variant" description="In RNA edited version.">
    <original>Y</original>
    <variation>C</variation>
    <location>
        <position position="482"/>
    </location>
</feature>
<feature type="sequence variant" description="In RNA edited version.">
    <original>S</original>
    <variation>G</variation>
    <location>
        <position position="490"/>
    </location>
</feature>
<feature type="sequence variant" description="In RNA edited version.">
    <original>E</original>
    <variation>G</variation>
    <location>
        <position position="492"/>
    </location>
</feature>
<feature type="sequence variant" description="In RNA edited version.">
    <original>Q</original>
    <variation>R</variation>
    <location>
        <position position="493"/>
    </location>
</feature>
<feature type="sequence variant" description="In RNA edited version.">
    <original>S</original>
    <variation>G</variation>
    <location>
        <position position="497"/>
    </location>
</feature>
<feature type="sequence variant" description="In RNA edited version.">
    <original>T</original>
    <variation>A</variation>
    <location>
        <position position="510"/>
    </location>
</feature>
<feature type="sequence variant" description="In RNA edited version.">
    <original>Y</original>
    <variation>C</variation>
    <location>
        <position position="513"/>
    </location>
</feature>
<feature type="sequence variant" description="In RNA edited version.">
    <original>Q</original>
    <variation>R</variation>
    <location>
        <position position="516"/>
    </location>
</feature>
<feature type="sequence variant" description="In RNA edited version.">
    <original>R</original>
    <variation>G</variation>
    <location>
        <position position="520"/>
    </location>
</feature>
<feature type="sequence variant" description="In RNA edited version.">
    <original>Y</original>
    <variation>C</variation>
    <location>
        <position position="521"/>
    </location>
</feature>
<feature type="sequence variant" description="In RNA edited version.">
    <original>Q</original>
    <variation>R</variation>
    <location>
        <position position="525"/>
    </location>
</feature>
<feature type="sequence variant" description="In RNA edited version.">
    <original>N</original>
    <variation>G</variation>
    <location>
        <position position="540"/>
    </location>
</feature>
<feature type="sequence variant" description="In RNA edited version.">
    <original>Y</original>
    <variation>E</variation>
    <location>
        <position position="551"/>
    </location>
</feature>
<feature type="sequence variant" description="In RNA edited version.">
    <original>P</original>
    <variation>R</variation>
    <location>
        <position position="552"/>
    </location>
</feature>
<feature type="sequence variant" description="In RNA edited version.">
    <original>G</original>
    <variation>F</variation>
    <location>
        <position position="553"/>
    </location>
</feature>
<feature type="sequence variant" description="In RNA edited version.">
    <original>S</original>
    <variation>E</variation>
    <location>
        <position position="554"/>
    </location>
</feature>
<feature type="sequence variant" description="In RNA edited version.">
    <original>S</original>
    <variation>I</variation>
    <location>
        <position position="555"/>
    </location>
</feature>
<feature type="sequence variant" description="In RNA edited version.">
    <location>
        <begin position="556"/>
        <end position="941"/>
    </location>
</feature>
<feature type="sequence conflict" description="In Ref. 1; CAA75533/CAA75535/Y15250." evidence="10" ref="1">
    <original>G</original>
    <variation>D</variation>
    <location>
        <position position="104"/>
    </location>
</feature>
<feature type="sequence conflict" description="In Ref. 1; CAA75533/CAA75535/Y15250." evidence="10" ref="1">
    <original>R</original>
    <variation>G</variation>
    <location>
        <position position="499"/>
    </location>
</feature>
<feature type="sequence conflict" description="In Ref. 1; CAA75533/CAA75535/Y15250." evidence="10" ref="1">
    <original>Q</original>
    <variation>QQQ</variation>
    <location>
        <position position="672"/>
    </location>
</feature>